<evidence type="ECO:0000255" key="1">
    <source>
        <dbReference type="HAMAP-Rule" id="MF_00135"/>
    </source>
</evidence>
<keyword id="KW-0028">Amino-acid biosynthesis</keyword>
<keyword id="KW-0057">Aromatic amino acid biosynthesis</keyword>
<keyword id="KW-0413">Isomerase</keyword>
<keyword id="KW-1185">Reference proteome</keyword>
<keyword id="KW-0822">Tryptophan biosynthesis</keyword>
<proteinExistence type="inferred from homology"/>
<dbReference type="EC" id="5.3.1.24" evidence="1"/>
<dbReference type="EMBL" id="AM295250">
    <property type="protein sequence ID" value="CAL27924.1"/>
    <property type="molecule type" value="Genomic_DNA"/>
</dbReference>
<dbReference type="RefSeq" id="WP_015900265.1">
    <property type="nucleotide sequence ID" value="NC_012121.1"/>
</dbReference>
<dbReference type="SMR" id="B9DP52"/>
<dbReference type="GeneID" id="93793441"/>
<dbReference type="KEGG" id="sca:SCA_1016"/>
<dbReference type="eggNOG" id="COG0135">
    <property type="taxonomic scope" value="Bacteria"/>
</dbReference>
<dbReference type="HOGENOM" id="CLU_076364_1_1_9"/>
<dbReference type="OrthoDB" id="9786954at2"/>
<dbReference type="BioCyc" id="SCAR396513:SCA_RS05095-MONOMER"/>
<dbReference type="UniPathway" id="UPA00035">
    <property type="reaction ID" value="UER00042"/>
</dbReference>
<dbReference type="Proteomes" id="UP000000444">
    <property type="component" value="Chromosome"/>
</dbReference>
<dbReference type="GO" id="GO:0004640">
    <property type="term" value="F:phosphoribosylanthranilate isomerase activity"/>
    <property type="evidence" value="ECO:0007669"/>
    <property type="project" value="UniProtKB-UniRule"/>
</dbReference>
<dbReference type="GO" id="GO:0000162">
    <property type="term" value="P:L-tryptophan biosynthetic process"/>
    <property type="evidence" value="ECO:0007669"/>
    <property type="project" value="UniProtKB-UniRule"/>
</dbReference>
<dbReference type="CDD" id="cd00405">
    <property type="entry name" value="PRAI"/>
    <property type="match status" value="1"/>
</dbReference>
<dbReference type="Gene3D" id="3.20.20.70">
    <property type="entry name" value="Aldolase class I"/>
    <property type="match status" value="1"/>
</dbReference>
<dbReference type="HAMAP" id="MF_00135">
    <property type="entry name" value="PRAI"/>
    <property type="match status" value="1"/>
</dbReference>
<dbReference type="InterPro" id="IPR013785">
    <property type="entry name" value="Aldolase_TIM"/>
</dbReference>
<dbReference type="InterPro" id="IPR001240">
    <property type="entry name" value="PRAI_dom"/>
</dbReference>
<dbReference type="InterPro" id="IPR011060">
    <property type="entry name" value="RibuloseP-bd_barrel"/>
</dbReference>
<dbReference type="InterPro" id="IPR044643">
    <property type="entry name" value="TrpF_fam"/>
</dbReference>
<dbReference type="NCBIfam" id="NF010563">
    <property type="entry name" value="PRK13958.1"/>
    <property type="match status" value="1"/>
</dbReference>
<dbReference type="PANTHER" id="PTHR42894">
    <property type="entry name" value="N-(5'-PHOSPHORIBOSYL)ANTHRANILATE ISOMERASE"/>
    <property type="match status" value="1"/>
</dbReference>
<dbReference type="PANTHER" id="PTHR42894:SF1">
    <property type="entry name" value="N-(5'-PHOSPHORIBOSYL)ANTHRANILATE ISOMERASE"/>
    <property type="match status" value="1"/>
</dbReference>
<dbReference type="Pfam" id="PF00697">
    <property type="entry name" value="PRAI"/>
    <property type="match status" value="1"/>
</dbReference>
<dbReference type="SUPFAM" id="SSF51366">
    <property type="entry name" value="Ribulose-phoshate binding barrel"/>
    <property type="match status" value="1"/>
</dbReference>
<sequence>MFLKYCGFQTQDDIKYAVEQHIDAIGFIHYPKSKRHQSIDEIEILSNLVPDTIYRVAVVVNPTDDIINQLLSRTNINAIQFHGDEDREMLRWCKNKYPDVKIIKALPADDTLSKRIQQYKEEADLFIIDTPSIHYGGTGQSFDWQVLEEIQDVPYLVAGGMTKEKIQQFEALHLNAAGYDIASGIETNGSKDPMKMKEISEYIKGEKQI</sequence>
<feature type="chain" id="PRO_1000197123" description="N-(5'-phosphoribosyl)anthranilate isomerase">
    <location>
        <begin position="1"/>
        <end position="209"/>
    </location>
</feature>
<accession>B9DP52</accession>
<organism>
    <name type="scientific">Staphylococcus carnosus (strain TM300)</name>
    <dbReference type="NCBI Taxonomy" id="396513"/>
    <lineage>
        <taxon>Bacteria</taxon>
        <taxon>Bacillati</taxon>
        <taxon>Bacillota</taxon>
        <taxon>Bacilli</taxon>
        <taxon>Bacillales</taxon>
        <taxon>Staphylococcaceae</taxon>
        <taxon>Staphylococcus</taxon>
    </lineage>
</organism>
<gene>
    <name evidence="1" type="primary">trpF</name>
    <name type="ordered locus">Sca_1016</name>
</gene>
<name>TRPF_STACT</name>
<protein>
    <recommendedName>
        <fullName evidence="1">N-(5'-phosphoribosyl)anthranilate isomerase</fullName>
        <shortName evidence="1">PRAI</shortName>
        <ecNumber evidence="1">5.3.1.24</ecNumber>
    </recommendedName>
</protein>
<reference key="1">
    <citation type="journal article" date="2009" name="Appl. Environ. Microbiol.">
        <title>Genome analysis of the meat starter culture bacterium Staphylococcus carnosus TM300.</title>
        <authorList>
            <person name="Rosenstein R."/>
            <person name="Nerz C."/>
            <person name="Biswas L."/>
            <person name="Resch A."/>
            <person name="Raddatz G."/>
            <person name="Schuster S.C."/>
            <person name="Goetz F."/>
        </authorList>
    </citation>
    <scope>NUCLEOTIDE SEQUENCE [LARGE SCALE GENOMIC DNA]</scope>
    <source>
        <strain>TM300</strain>
    </source>
</reference>
<comment type="catalytic activity">
    <reaction evidence="1">
        <text>N-(5-phospho-beta-D-ribosyl)anthranilate = 1-(2-carboxyphenylamino)-1-deoxy-D-ribulose 5-phosphate</text>
        <dbReference type="Rhea" id="RHEA:21540"/>
        <dbReference type="ChEBI" id="CHEBI:18277"/>
        <dbReference type="ChEBI" id="CHEBI:58613"/>
        <dbReference type="EC" id="5.3.1.24"/>
    </reaction>
</comment>
<comment type="pathway">
    <text evidence="1">Amino-acid biosynthesis; L-tryptophan biosynthesis; L-tryptophan from chorismate: step 3/5.</text>
</comment>
<comment type="similarity">
    <text evidence="1">Belongs to the TrpF family.</text>
</comment>